<evidence type="ECO:0000255" key="1">
    <source>
        <dbReference type="PROSITE-ProRule" id="PRU00290"/>
    </source>
</evidence>
<evidence type="ECO:0000256" key="2">
    <source>
        <dbReference type="SAM" id="MobiDB-lite"/>
    </source>
</evidence>
<evidence type="ECO:0000305" key="3"/>
<feature type="chain" id="PRO_0000051249" description="Syntaxin-binding protein 5-like">
    <location>
        <begin position="1"/>
        <end position="1159"/>
    </location>
</feature>
<feature type="repeat" description="WD 1">
    <location>
        <begin position="67"/>
        <end position="108"/>
    </location>
</feature>
<feature type="repeat" description="WD 2">
    <location>
        <begin position="115"/>
        <end position="154"/>
    </location>
</feature>
<feature type="repeat" description="WD 3">
    <location>
        <begin position="159"/>
        <end position="195"/>
    </location>
</feature>
<feature type="repeat" description="WD 4">
    <location>
        <begin position="214"/>
        <end position="248"/>
    </location>
</feature>
<feature type="repeat" description="WD 5">
    <location>
        <begin position="254"/>
        <end position="286"/>
    </location>
</feature>
<feature type="repeat" description="WD 6">
    <location>
        <begin position="307"/>
        <end position="350"/>
    </location>
</feature>
<feature type="repeat" description="WD 7">
    <location>
        <begin position="358"/>
        <end position="392"/>
    </location>
</feature>
<feature type="repeat" description="WD 8">
    <location>
        <begin position="414"/>
        <end position="491"/>
    </location>
</feature>
<feature type="repeat" description="WD 9">
    <location>
        <begin position="519"/>
        <end position="628"/>
    </location>
</feature>
<feature type="repeat" description="WD 10">
    <location>
        <begin position="642"/>
        <end position="703"/>
    </location>
</feature>
<feature type="repeat" description="WD 11">
    <location>
        <begin position="808"/>
        <end position="865"/>
    </location>
</feature>
<feature type="repeat" description="WD 12">
    <location>
        <begin position="874"/>
        <end position="946"/>
    </location>
</feature>
<feature type="repeat" description="WD 13">
    <location>
        <begin position="951"/>
        <end position="995"/>
    </location>
</feature>
<feature type="repeat" description="WD 14">
    <location>
        <begin position="1009"/>
        <end position="1032"/>
    </location>
</feature>
<feature type="domain" description="v-SNARE coiled-coil homology" evidence="1">
    <location>
        <begin position="1094"/>
        <end position="1154"/>
    </location>
</feature>
<feature type="region of interest" description="Disordered" evidence="2">
    <location>
        <begin position="1"/>
        <end position="37"/>
    </location>
</feature>
<feature type="region of interest" description="Disordered" evidence="2">
    <location>
        <begin position="571"/>
        <end position="604"/>
    </location>
</feature>
<feature type="region of interest" description="Disordered" evidence="2">
    <location>
        <begin position="690"/>
        <end position="770"/>
    </location>
</feature>
<feature type="compositionally biased region" description="Low complexity" evidence="2">
    <location>
        <begin position="25"/>
        <end position="37"/>
    </location>
</feature>
<feature type="compositionally biased region" description="Polar residues" evidence="2">
    <location>
        <begin position="699"/>
        <end position="713"/>
    </location>
</feature>
<feature type="compositionally biased region" description="Polar residues" evidence="2">
    <location>
        <begin position="721"/>
        <end position="739"/>
    </location>
</feature>
<organism>
    <name type="scientific">Danio rerio</name>
    <name type="common">Zebrafish</name>
    <name type="synonym">Brachydanio rerio</name>
    <dbReference type="NCBI Taxonomy" id="7955"/>
    <lineage>
        <taxon>Eukaryota</taxon>
        <taxon>Metazoa</taxon>
        <taxon>Chordata</taxon>
        <taxon>Craniata</taxon>
        <taxon>Vertebrata</taxon>
        <taxon>Euteleostomi</taxon>
        <taxon>Actinopterygii</taxon>
        <taxon>Neopterygii</taxon>
        <taxon>Teleostei</taxon>
        <taxon>Ostariophysi</taxon>
        <taxon>Cypriniformes</taxon>
        <taxon>Danionidae</taxon>
        <taxon>Danioninae</taxon>
        <taxon>Danio</taxon>
    </lineage>
</organism>
<proteinExistence type="inferred from homology"/>
<sequence>MKKFRKVLDGLTTSSPVNPGGSPGCGSAAGTPSAAPTPRELEIQETLMSEHFQICKTVRHGFPYQPTALAFDPVQKILAIGSRSGGIRMYPFLSFPHLGRPGVDCHSQHESGAAVLQMQFLINEGALVTACADDTLHLWSLRQRLPAILHSLKFNRERITFCHLPFQSKWLYVGTERGNTHIVNIESFILSGYVIMWNKAIELSTKTHPGPVVHLSDSPKDEGKLLIGFESGTIVMWDLRAKRADFRIYYDEAIHSVSWHHEGRQFMCSHSDGSLSMWNMRNTAKPFQVTFPHGKTQRDGRKESCKPILKVEYKTSRNSSEAFVIFSGGLSYDKAGRRPTLTIMHGKAITVLEMDYPIVDFMVLCETPYLNEVQEPYAVVVLLEKDFVVVDLTQSNFPIFENPYPMDVHESPVTCTAYFADCPPDIIPVLYSIGAKHKKTGYSHKEWPVSGGTWTVGSQTYPEIIITGHADGSIKFWDATAITLQMLYKLKTSKVFEKPKTGDMGRSADLVEEDPYAVQMISWCPQSRIFCVVGISAHVILYRFSKHDANTIITSLELRLQCEMEDVISPSDTENTPCFSDPSGHSPQPQPPSPRSNTPDSVRDSIPCLKVKDRMIRMPPGYQAELVVQLLWVDGEPPQQITCLDLNSAYGLLALGNCNGLAVVDYLQKTILLCMSTLELYGSADPFQRLTRSPRKNRQSTSGLTELSDNQVSLDLERSKSPTSDHVNGHCTSPTSQPCPSGRARVPGGPEGPRLARRGPGRPPFRKAQSAACMEVSLPVSSLTEENSFSRSRSSSVSSIDRETKEAVTTLQFAESYGRKSDSLPTPCLWVGTSLGLVLIIPMSIPTDEQERQEDPVTVAPTGTVLMLKGSVLRFGFLDCGGALINSPYEVWRDQHAPDDPDRPRKRKLVNFSPSSSQEACGDGHLAVVCSERQAKVFYMPSQACLYVHNITESSFVLRADVVSVSNSVCLACFCANGHIMILSLPSLRPLLDVSYLPLTDMRIARTFCFTNGGQALYLCSPTEIQRITYSQEMCETLGELFTPIETPEAQNRGFLKGFFGGNAQTFDREELFGEASAGKASRSLAQHIPGQGGIEGMKAAAGGVVGDLARARIALDERGQRLGELEERTALMMTSAETFSKHAHELMLKCKDKKWYQF</sequence>
<reference key="1">
    <citation type="journal article" date="2013" name="Nature">
        <title>The zebrafish reference genome sequence and its relationship to the human genome.</title>
        <authorList>
            <person name="Howe K."/>
            <person name="Clark M.D."/>
            <person name="Torroja C.F."/>
            <person name="Torrance J."/>
            <person name="Berthelot C."/>
            <person name="Muffato M."/>
            <person name="Collins J.E."/>
            <person name="Humphray S."/>
            <person name="McLaren K."/>
            <person name="Matthews L."/>
            <person name="McLaren S."/>
            <person name="Sealy I."/>
            <person name="Caccamo M."/>
            <person name="Churcher C."/>
            <person name="Scott C."/>
            <person name="Barrett J.C."/>
            <person name="Koch R."/>
            <person name="Rauch G.J."/>
            <person name="White S."/>
            <person name="Chow W."/>
            <person name="Kilian B."/>
            <person name="Quintais L.T."/>
            <person name="Guerra-Assuncao J.A."/>
            <person name="Zhou Y."/>
            <person name="Gu Y."/>
            <person name="Yen J."/>
            <person name="Vogel J.H."/>
            <person name="Eyre T."/>
            <person name="Redmond S."/>
            <person name="Banerjee R."/>
            <person name="Chi J."/>
            <person name="Fu B."/>
            <person name="Langley E."/>
            <person name="Maguire S.F."/>
            <person name="Laird G.K."/>
            <person name="Lloyd D."/>
            <person name="Kenyon E."/>
            <person name="Donaldson S."/>
            <person name="Sehra H."/>
            <person name="Almeida-King J."/>
            <person name="Loveland J."/>
            <person name="Trevanion S."/>
            <person name="Jones M."/>
            <person name="Quail M."/>
            <person name="Willey D."/>
            <person name="Hunt A."/>
            <person name="Burton J."/>
            <person name="Sims S."/>
            <person name="McLay K."/>
            <person name="Plumb B."/>
            <person name="Davis J."/>
            <person name="Clee C."/>
            <person name="Oliver K."/>
            <person name="Clark R."/>
            <person name="Riddle C."/>
            <person name="Elliot D."/>
            <person name="Threadgold G."/>
            <person name="Harden G."/>
            <person name="Ware D."/>
            <person name="Begum S."/>
            <person name="Mortimore B."/>
            <person name="Kerry G."/>
            <person name="Heath P."/>
            <person name="Phillimore B."/>
            <person name="Tracey A."/>
            <person name="Corby N."/>
            <person name="Dunn M."/>
            <person name="Johnson C."/>
            <person name="Wood J."/>
            <person name="Clark S."/>
            <person name="Pelan S."/>
            <person name="Griffiths G."/>
            <person name="Smith M."/>
            <person name="Glithero R."/>
            <person name="Howden P."/>
            <person name="Barker N."/>
            <person name="Lloyd C."/>
            <person name="Stevens C."/>
            <person name="Harley J."/>
            <person name="Holt K."/>
            <person name="Panagiotidis G."/>
            <person name="Lovell J."/>
            <person name="Beasley H."/>
            <person name="Henderson C."/>
            <person name="Gordon D."/>
            <person name="Auger K."/>
            <person name="Wright D."/>
            <person name="Collins J."/>
            <person name="Raisen C."/>
            <person name="Dyer L."/>
            <person name="Leung K."/>
            <person name="Robertson L."/>
            <person name="Ambridge K."/>
            <person name="Leongamornlert D."/>
            <person name="McGuire S."/>
            <person name="Gilderthorp R."/>
            <person name="Griffiths C."/>
            <person name="Manthravadi D."/>
            <person name="Nichol S."/>
            <person name="Barker G."/>
            <person name="Whitehead S."/>
            <person name="Kay M."/>
            <person name="Brown J."/>
            <person name="Murnane C."/>
            <person name="Gray E."/>
            <person name="Humphries M."/>
            <person name="Sycamore N."/>
            <person name="Barker D."/>
            <person name="Saunders D."/>
            <person name="Wallis J."/>
            <person name="Babbage A."/>
            <person name="Hammond S."/>
            <person name="Mashreghi-Mohammadi M."/>
            <person name="Barr L."/>
            <person name="Martin S."/>
            <person name="Wray P."/>
            <person name="Ellington A."/>
            <person name="Matthews N."/>
            <person name="Ellwood M."/>
            <person name="Woodmansey R."/>
            <person name="Clark G."/>
            <person name="Cooper J."/>
            <person name="Tromans A."/>
            <person name="Grafham D."/>
            <person name="Skuce C."/>
            <person name="Pandian R."/>
            <person name="Andrews R."/>
            <person name="Harrison E."/>
            <person name="Kimberley A."/>
            <person name="Garnett J."/>
            <person name="Fosker N."/>
            <person name="Hall R."/>
            <person name="Garner P."/>
            <person name="Kelly D."/>
            <person name="Bird C."/>
            <person name="Palmer S."/>
            <person name="Gehring I."/>
            <person name="Berger A."/>
            <person name="Dooley C.M."/>
            <person name="Ersan-Urun Z."/>
            <person name="Eser C."/>
            <person name="Geiger H."/>
            <person name="Geisler M."/>
            <person name="Karotki L."/>
            <person name="Kirn A."/>
            <person name="Konantz J."/>
            <person name="Konantz M."/>
            <person name="Oberlander M."/>
            <person name="Rudolph-Geiger S."/>
            <person name="Teucke M."/>
            <person name="Lanz C."/>
            <person name="Raddatz G."/>
            <person name="Osoegawa K."/>
            <person name="Zhu B."/>
            <person name="Rapp A."/>
            <person name="Widaa S."/>
            <person name="Langford C."/>
            <person name="Yang F."/>
            <person name="Schuster S.C."/>
            <person name="Carter N.P."/>
            <person name="Harrow J."/>
            <person name="Ning Z."/>
            <person name="Herrero J."/>
            <person name="Searle S.M."/>
            <person name="Enright A."/>
            <person name="Geisler R."/>
            <person name="Plasterk R.H."/>
            <person name="Lee C."/>
            <person name="Westerfield M."/>
            <person name="de Jong P.J."/>
            <person name="Zon L.I."/>
            <person name="Postlethwait J.H."/>
            <person name="Nusslein-Volhard C."/>
            <person name="Hubbard T.J."/>
            <person name="Roest Crollius H."/>
            <person name="Rogers J."/>
            <person name="Stemple D.L."/>
        </authorList>
    </citation>
    <scope>NUCLEOTIDE SEQUENCE [LARGE SCALE GENOMIC DNA]</scope>
    <source>
        <strain>Tuebingen</strain>
    </source>
</reference>
<gene>
    <name type="primary">stxbp5l</name>
    <name type="ORF">si:ch211-194d6.1</name>
</gene>
<name>STB5L_DANRE</name>
<protein>
    <recommendedName>
        <fullName>Syntaxin-binding protein 5-like</fullName>
    </recommendedName>
</protein>
<keyword id="KW-1003">Cell membrane</keyword>
<keyword id="KW-0175">Coiled coil</keyword>
<keyword id="KW-0963">Cytoplasm</keyword>
<keyword id="KW-0268">Exocytosis</keyword>
<keyword id="KW-0472">Membrane</keyword>
<keyword id="KW-0653">Protein transport</keyword>
<keyword id="KW-1185">Reference proteome</keyword>
<keyword id="KW-0677">Repeat</keyword>
<keyword id="KW-0813">Transport</keyword>
<keyword id="KW-0853">WD repeat</keyword>
<comment type="function">
    <text evidence="3">May play a role in vesicle trafficking and exocytosis.</text>
</comment>
<comment type="subcellular location">
    <subcellularLocation>
        <location evidence="3">Cytoplasm</location>
    </subcellularLocation>
    <subcellularLocation>
        <location evidence="3">Cell membrane</location>
        <topology evidence="3">Peripheral membrane protein</topology>
    </subcellularLocation>
    <subcellularLocation>
        <location evidence="3">Membrane</location>
        <topology evidence="3">Peripheral membrane protein</topology>
    </subcellularLocation>
    <text evidence="3">Cytoplasmic, and associated with vesicular membranes and the plasma membrane.</text>
</comment>
<comment type="similarity">
    <text evidence="3">Belongs to the WD repeat L(2)GL family.</text>
</comment>
<dbReference type="EMBL" id="AL772198">
    <property type="protein sequence ID" value="CAI11695.1"/>
    <property type="molecule type" value="Genomic_DNA"/>
</dbReference>
<dbReference type="EMBL" id="BX322637">
    <property type="protein sequence ID" value="CAI11695.1"/>
    <property type="status" value="JOINED"/>
    <property type="molecule type" value="Genomic_DNA"/>
</dbReference>
<dbReference type="EMBL" id="BX322637">
    <property type="protein sequence ID" value="CAI20992.1"/>
    <property type="molecule type" value="Genomic_DNA"/>
</dbReference>
<dbReference type="EMBL" id="AL772198">
    <property type="protein sequence ID" value="CAI20992.1"/>
    <property type="status" value="JOINED"/>
    <property type="molecule type" value="Genomic_DNA"/>
</dbReference>
<dbReference type="RefSeq" id="NP_001038602.1">
    <property type="nucleotide sequence ID" value="NM_001045137.1"/>
</dbReference>
<dbReference type="SMR" id="Q5SQE2"/>
<dbReference type="FunCoup" id="Q5SQE2">
    <property type="interactions" value="1208"/>
</dbReference>
<dbReference type="STRING" id="7955.ENSDARP00000027152"/>
<dbReference type="PaxDb" id="7955-ENSDARP00000027152"/>
<dbReference type="Ensembl" id="ENSDART00000017292">
    <property type="protein sequence ID" value="ENSDARP00000027152"/>
    <property type="gene ID" value="ENSDARG00000006383"/>
</dbReference>
<dbReference type="GeneID" id="567605"/>
<dbReference type="KEGG" id="dre:567605"/>
<dbReference type="AGR" id="ZFIN:ZDB-GENE-041210-220"/>
<dbReference type="CTD" id="9515"/>
<dbReference type="ZFIN" id="ZDB-GENE-041210-220">
    <property type="gene designation" value="stxbp5l"/>
</dbReference>
<dbReference type="eggNOG" id="KOG1983">
    <property type="taxonomic scope" value="Eukaryota"/>
</dbReference>
<dbReference type="HOGENOM" id="CLU_002808_0_0_1"/>
<dbReference type="InParanoid" id="Q5SQE2"/>
<dbReference type="OrthoDB" id="19944at2759"/>
<dbReference type="PhylomeDB" id="Q5SQE2"/>
<dbReference type="TreeFam" id="TF314585"/>
<dbReference type="PRO" id="PR:Q5SQE2"/>
<dbReference type="Proteomes" id="UP000000437">
    <property type="component" value="Alternate scaffold 9"/>
</dbReference>
<dbReference type="Proteomes" id="UP000000437">
    <property type="component" value="Chromosome 9"/>
</dbReference>
<dbReference type="Bgee" id="ENSDARG00000006383">
    <property type="expression patterns" value="Expressed in brain and 5 other cell types or tissues"/>
</dbReference>
<dbReference type="ExpressionAtlas" id="Q5SQE2">
    <property type="expression patterns" value="baseline and differential"/>
</dbReference>
<dbReference type="GO" id="GO:0005737">
    <property type="term" value="C:cytoplasm"/>
    <property type="evidence" value="ECO:0000318"/>
    <property type="project" value="GO_Central"/>
</dbReference>
<dbReference type="GO" id="GO:0005886">
    <property type="term" value="C:plasma membrane"/>
    <property type="evidence" value="ECO:0000318"/>
    <property type="project" value="GO_Central"/>
</dbReference>
<dbReference type="GO" id="GO:0031201">
    <property type="term" value="C:SNARE complex"/>
    <property type="evidence" value="ECO:0000318"/>
    <property type="project" value="GO_Central"/>
</dbReference>
<dbReference type="GO" id="GO:0005096">
    <property type="term" value="F:GTPase activator activity"/>
    <property type="evidence" value="ECO:0000318"/>
    <property type="project" value="GO_Central"/>
</dbReference>
<dbReference type="GO" id="GO:0045159">
    <property type="term" value="F:myosin II binding"/>
    <property type="evidence" value="ECO:0000318"/>
    <property type="project" value="GO_Central"/>
</dbReference>
<dbReference type="GO" id="GO:0019905">
    <property type="term" value="F:syntaxin binding"/>
    <property type="evidence" value="ECO:0000318"/>
    <property type="project" value="GO_Central"/>
</dbReference>
<dbReference type="GO" id="GO:0006887">
    <property type="term" value="P:exocytosis"/>
    <property type="evidence" value="ECO:0000318"/>
    <property type="project" value="GO_Central"/>
</dbReference>
<dbReference type="GO" id="GO:0006893">
    <property type="term" value="P:Golgi to plasma membrane transport"/>
    <property type="evidence" value="ECO:0000318"/>
    <property type="project" value="GO_Central"/>
</dbReference>
<dbReference type="GO" id="GO:0015031">
    <property type="term" value="P:protein transport"/>
    <property type="evidence" value="ECO:0007669"/>
    <property type="project" value="UniProtKB-KW"/>
</dbReference>
<dbReference type="CDD" id="cd15893">
    <property type="entry name" value="R-SNARE_STXBP5"/>
    <property type="match status" value="1"/>
</dbReference>
<dbReference type="FunFam" id="1.20.5.110:FF:000001">
    <property type="entry name" value="syntaxin-binding protein 5 isoform X1"/>
    <property type="match status" value="1"/>
</dbReference>
<dbReference type="FunFam" id="2.130.10.10:FF:000521">
    <property type="entry name" value="syntaxin-binding protein 5-like isoform X1"/>
    <property type="match status" value="1"/>
</dbReference>
<dbReference type="Gene3D" id="1.20.5.110">
    <property type="match status" value="1"/>
</dbReference>
<dbReference type="Gene3D" id="2.130.10.10">
    <property type="entry name" value="YVTN repeat-like/Quinoprotein amine dehydrogenase"/>
    <property type="match status" value="2"/>
</dbReference>
<dbReference type="InterPro" id="IPR000664">
    <property type="entry name" value="Lethal2_giant"/>
</dbReference>
<dbReference type="InterPro" id="IPR013577">
    <property type="entry name" value="LLGL2"/>
</dbReference>
<dbReference type="InterPro" id="IPR042855">
    <property type="entry name" value="V_SNARE_CC"/>
</dbReference>
<dbReference type="InterPro" id="IPR015943">
    <property type="entry name" value="WD40/YVTN_repeat-like_dom_sf"/>
</dbReference>
<dbReference type="InterPro" id="IPR036322">
    <property type="entry name" value="WD40_repeat_dom_sf"/>
</dbReference>
<dbReference type="InterPro" id="IPR001680">
    <property type="entry name" value="WD40_rpt"/>
</dbReference>
<dbReference type="PANTHER" id="PTHR10241">
    <property type="entry name" value="LETHAL 2 GIANT LARVAE PROTEIN"/>
    <property type="match status" value="1"/>
</dbReference>
<dbReference type="PANTHER" id="PTHR10241:SF19">
    <property type="entry name" value="SYNTAXIN-BINDING PROTEIN 5-LIKE"/>
    <property type="match status" value="1"/>
</dbReference>
<dbReference type="Pfam" id="PF08366">
    <property type="entry name" value="LLGL"/>
    <property type="match status" value="1"/>
</dbReference>
<dbReference type="Pfam" id="PF00400">
    <property type="entry name" value="WD40"/>
    <property type="match status" value="1"/>
</dbReference>
<dbReference type="PRINTS" id="PR00962">
    <property type="entry name" value="LETHAL2GIANT"/>
</dbReference>
<dbReference type="SMART" id="SM00320">
    <property type="entry name" value="WD40"/>
    <property type="match status" value="6"/>
</dbReference>
<dbReference type="SUPFAM" id="SSF58038">
    <property type="entry name" value="SNARE fusion complex"/>
    <property type="match status" value="1"/>
</dbReference>
<dbReference type="SUPFAM" id="SSF50978">
    <property type="entry name" value="WD40 repeat-like"/>
    <property type="match status" value="2"/>
</dbReference>
<dbReference type="PROSITE" id="PS50892">
    <property type="entry name" value="V_SNARE"/>
    <property type="match status" value="1"/>
</dbReference>
<dbReference type="PROSITE" id="PS00678">
    <property type="entry name" value="WD_REPEATS_1"/>
    <property type="match status" value="1"/>
</dbReference>
<dbReference type="PROSITE" id="PS50294">
    <property type="entry name" value="WD_REPEATS_REGION"/>
    <property type="match status" value="1"/>
</dbReference>
<accession>Q5SQE2</accession>